<keyword id="KW-1003">Cell membrane</keyword>
<keyword id="KW-0342">GTP-binding</keyword>
<keyword id="KW-0378">Hydrolase</keyword>
<keyword id="KW-0472">Membrane</keyword>
<keyword id="KW-0547">Nucleotide-binding</keyword>
<keyword id="KW-0648">Protein biosynthesis</keyword>
<keyword id="KW-1185">Reference proteome</keyword>
<reference key="1">
    <citation type="journal article" date="2013" name="Stand. Genomic Sci.">
        <title>Complete genome sequence of Arthrobacter sp. strain FB24.</title>
        <authorList>
            <person name="Nakatsu C.H."/>
            <person name="Barabote R."/>
            <person name="Thompson S."/>
            <person name="Bruce D."/>
            <person name="Detter C."/>
            <person name="Brettin T."/>
            <person name="Han C."/>
            <person name="Beasley F."/>
            <person name="Chen W."/>
            <person name="Konopka A."/>
            <person name="Xie G."/>
        </authorList>
    </citation>
    <scope>NUCLEOTIDE SEQUENCE [LARGE SCALE GENOMIC DNA]</scope>
    <source>
        <strain>FB24</strain>
    </source>
</reference>
<dbReference type="EC" id="3.6.5.n1" evidence="1"/>
<dbReference type="EMBL" id="CP000454">
    <property type="protein sequence ID" value="ABK03620.1"/>
    <property type="molecule type" value="Genomic_DNA"/>
</dbReference>
<dbReference type="RefSeq" id="WP_011692084.1">
    <property type="nucleotide sequence ID" value="NC_008541.1"/>
</dbReference>
<dbReference type="SMR" id="A0JX50"/>
<dbReference type="STRING" id="290399.Arth_2240"/>
<dbReference type="KEGG" id="art:Arth_2240"/>
<dbReference type="eggNOG" id="COG0481">
    <property type="taxonomic scope" value="Bacteria"/>
</dbReference>
<dbReference type="HOGENOM" id="CLU_009995_3_3_11"/>
<dbReference type="Proteomes" id="UP000000754">
    <property type="component" value="Chromosome"/>
</dbReference>
<dbReference type="GO" id="GO:0005886">
    <property type="term" value="C:plasma membrane"/>
    <property type="evidence" value="ECO:0007669"/>
    <property type="project" value="UniProtKB-SubCell"/>
</dbReference>
<dbReference type="GO" id="GO:0005525">
    <property type="term" value="F:GTP binding"/>
    <property type="evidence" value="ECO:0007669"/>
    <property type="project" value="UniProtKB-UniRule"/>
</dbReference>
<dbReference type="GO" id="GO:0003924">
    <property type="term" value="F:GTPase activity"/>
    <property type="evidence" value="ECO:0007669"/>
    <property type="project" value="UniProtKB-UniRule"/>
</dbReference>
<dbReference type="GO" id="GO:0043022">
    <property type="term" value="F:ribosome binding"/>
    <property type="evidence" value="ECO:0007669"/>
    <property type="project" value="UniProtKB-UniRule"/>
</dbReference>
<dbReference type="GO" id="GO:0003746">
    <property type="term" value="F:translation elongation factor activity"/>
    <property type="evidence" value="ECO:0007669"/>
    <property type="project" value="UniProtKB-UniRule"/>
</dbReference>
<dbReference type="GO" id="GO:0045727">
    <property type="term" value="P:positive regulation of translation"/>
    <property type="evidence" value="ECO:0007669"/>
    <property type="project" value="UniProtKB-UniRule"/>
</dbReference>
<dbReference type="CDD" id="cd03699">
    <property type="entry name" value="EF4_II"/>
    <property type="match status" value="1"/>
</dbReference>
<dbReference type="CDD" id="cd16260">
    <property type="entry name" value="EF4_III"/>
    <property type="match status" value="1"/>
</dbReference>
<dbReference type="CDD" id="cd01890">
    <property type="entry name" value="LepA"/>
    <property type="match status" value="1"/>
</dbReference>
<dbReference type="CDD" id="cd03709">
    <property type="entry name" value="lepA_C"/>
    <property type="match status" value="1"/>
</dbReference>
<dbReference type="FunFam" id="3.40.50.300:FF:000078">
    <property type="entry name" value="Elongation factor 4"/>
    <property type="match status" value="1"/>
</dbReference>
<dbReference type="FunFam" id="2.40.30.10:FF:000015">
    <property type="entry name" value="Translation factor GUF1, mitochondrial"/>
    <property type="match status" value="1"/>
</dbReference>
<dbReference type="FunFam" id="3.30.70.240:FF:000007">
    <property type="entry name" value="Translation factor GUF1, mitochondrial"/>
    <property type="match status" value="1"/>
</dbReference>
<dbReference type="FunFam" id="3.30.70.2570:FF:000001">
    <property type="entry name" value="Translation factor GUF1, mitochondrial"/>
    <property type="match status" value="1"/>
</dbReference>
<dbReference type="FunFam" id="3.30.70.870:FF:000004">
    <property type="entry name" value="Translation factor GUF1, mitochondrial"/>
    <property type="match status" value="1"/>
</dbReference>
<dbReference type="Gene3D" id="3.30.70.240">
    <property type="match status" value="1"/>
</dbReference>
<dbReference type="Gene3D" id="3.30.70.2570">
    <property type="entry name" value="Elongation factor 4, C-terminal domain"/>
    <property type="match status" value="1"/>
</dbReference>
<dbReference type="Gene3D" id="3.30.70.870">
    <property type="entry name" value="Elongation Factor G (Translational Gtpase), domain 3"/>
    <property type="match status" value="1"/>
</dbReference>
<dbReference type="Gene3D" id="3.40.50.300">
    <property type="entry name" value="P-loop containing nucleotide triphosphate hydrolases"/>
    <property type="match status" value="1"/>
</dbReference>
<dbReference type="Gene3D" id="2.40.30.10">
    <property type="entry name" value="Translation factors"/>
    <property type="match status" value="1"/>
</dbReference>
<dbReference type="HAMAP" id="MF_00071">
    <property type="entry name" value="LepA"/>
    <property type="match status" value="1"/>
</dbReference>
<dbReference type="InterPro" id="IPR006297">
    <property type="entry name" value="EF-4"/>
</dbReference>
<dbReference type="InterPro" id="IPR035647">
    <property type="entry name" value="EFG_III/V"/>
</dbReference>
<dbReference type="InterPro" id="IPR000640">
    <property type="entry name" value="EFG_V-like"/>
</dbReference>
<dbReference type="InterPro" id="IPR031157">
    <property type="entry name" value="G_TR_CS"/>
</dbReference>
<dbReference type="InterPro" id="IPR038363">
    <property type="entry name" value="LepA_C_sf"/>
</dbReference>
<dbReference type="InterPro" id="IPR013842">
    <property type="entry name" value="LepA_CTD"/>
</dbReference>
<dbReference type="InterPro" id="IPR035654">
    <property type="entry name" value="LepA_IV"/>
</dbReference>
<dbReference type="InterPro" id="IPR027417">
    <property type="entry name" value="P-loop_NTPase"/>
</dbReference>
<dbReference type="InterPro" id="IPR005225">
    <property type="entry name" value="Small_GTP-bd"/>
</dbReference>
<dbReference type="InterPro" id="IPR000795">
    <property type="entry name" value="T_Tr_GTP-bd_dom"/>
</dbReference>
<dbReference type="InterPro" id="IPR009000">
    <property type="entry name" value="Transl_B-barrel_sf"/>
</dbReference>
<dbReference type="NCBIfam" id="TIGR01393">
    <property type="entry name" value="lepA"/>
    <property type="match status" value="1"/>
</dbReference>
<dbReference type="NCBIfam" id="TIGR00231">
    <property type="entry name" value="small_GTP"/>
    <property type="match status" value="1"/>
</dbReference>
<dbReference type="PANTHER" id="PTHR43512:SF4">
    <property type="entry name" value="TRANSLATION FACTOR GUF1 HOMOLOG, CHLOROPLASTIC"/>
    <property type="match status" value="1"/>
</dbReference>
<dbReference type="PANTHER" id="PTHR43512">
    <property type="entry name" value="TRANSLATION FACTOR GUF1-RELATED"/>
    <property type="match status" value="1"/>
</dbReference>
<dbReference type="Pfam" id="PF00679">
    <property type="entry name" value="EFG_C"/>
    <property type="match status" value="1"/>
</dbReference>
<dbReference type="Pfam" id="PF00009">
    <property type="entry name" value="GTP_EFTU"/>
    <property type="match status" value="1"/>
</dbReference>
<dbReference type="Pfam" id="PF06421">
    <property type="entry name" value="LepA_C"/>
    <property type="match status" value="1"/>
</dbReference>
<dbReference type="PRINTS" id="PR00315">
    <property type="entry name" value="ELONGATNFCT"/>
</dbReference>
<dbReference type="SMART" id="SM00838">
    <property type="entry name" value="EFG_C"/>
    <property type="match status" value="1"/>
</dbReference>
<dbReference type="SUPFAM" id="SSF54980">
    <property type="entry name" value="EF-G C-terminal domain-like"/>
    <property type="match status" value="2"/>
</dbReference>
<dbReference type="SUPFAM" id="SSF52540">
    <property type="entry name" value="P-loop containing nucleoside triphosphate hydrolases"/>
    <property type="match status" value="1"/>
</dbReference>
<dbReference type="SUPFAM" id="SSF50447">
    <property type="entry name" value="Translation proteins"/>
    <property type="match status" value="1"/>
</dbReference>
<dbReference type="PROSITE" id="PS00301">
    <property type="entry name" value="G_TR_1"/>
    <property type="match status" value="1"/>
</dbReference>
<dbReference type="PROSITE" id="PS51722">
    <property type="entry name" value="G_TR_2"/>
    <property type="match status" value="1"/>
</dbReference>
<comment type="function">
    <text evidence="1">Required for accurate and efficient protein synthesis under certain stress conditions. May act as a fidelity factor of the translation reaction, by catalyzing a one-codon backward translocation of tRNAs on improperly translocated ribosomes. Back-translocation proceeds from a post-translocation (POST) complex to a pre-translocation (PRE) complex, thus giving elongation factor G a second chance to translocate the tRNAs correctly. Binds to ribosomes in a GTP-dependent manner.</text>
</comment>
<comment type="catalytic activity">
    <reaction evidence="1">
        <text>GTP + H2O = GDP + phosphate + H(+)</text>
        <dbReference type="Rhea" id="RHEA:19669"/>
        <dbReference type="ChEBI" id="CHEBI:15377"/>
        <dbReference type="ChEBI" id="CHEBI:15378"/>
        <dbReference type="ChEBI" id="CHEBI:37565"/>
        <dbReference type="ChEBI" id="CHEBI:43474"/>
        <dbReference type="ChEBI" id="CHEBI:58189"/>
        <dbReference type="EC" id="3.6.5.n1"/>
    </reaction>
</comment>
<comment type="subcellular location">
    <subcellularLocation>
        <location evidence="1">Cell membrane</location>
        <topology evidence="1">Peripheral membrane protein</topology>
        <orientation evidence="1">Cytoplasmic side</orientation>
    </subcellularLocation>
</comment>
<comment type="similarity">
    <text evidence="1">Belongs to the TRAFAC class translation factor GTPase superfamily. Classic translation factor GTPase family. LepA subfamily.</text>
</comment>
<evidence type="ECO:0000255" key="1">
    <source>
        <dbReference type="HAMAP-Rule" id="MF_00071"/>
    </source>
</evidence>
<proteinExistence type="inferred from homology"/>
<protein>
    <recommendedName>
        <fullName evidence="1">Elongation factor 4</fullName>
        <shortName evidence="1">EF-4</shortName>
        <ecNumber evidence="1">3.6.5.n1</ecNumber>
    </recommendedName>
    <alternativeName>
        <fullName evidence="1">Ribosomal back-translocase LepA</fullName>
    </alternativeName>
</protein>
<organism>
    <name type="scientific">Arthrobacter sp. (strain FB24)</name>
    <dbReference type="NCBI Taxonomy" id="290399"/>
    <lineage>
        <taxon>Bacteria</taxon>
        <taxon>Bacillati</taxon>
        <taxon>Actinomycetota</taxon>
        <taxon>Actinomycetes</taxon>
        <taxon>Micrococcales</taxon>
        <taxon>Micrococcaceae</taxon>
        <taxon>Arthrobacter</taxon>
    </lineage>
</organism>
<name>LEPA_ARTS2</name>
<feature type="chain" id="PRO_1000031965" description="Elongation factor 4">
    <location>
        <begin position="1"/>
        <end position="617"/>
    </location>
</feature>
<feature type="domain" description="tr-type G">
    <location>
        <begin position="17"/>
        <end position="198"/>
    </location>
</feature>
<feature type="binding site" evidence="1">
    <location>
        <begin position="29"/>
        <end position="34"/>
    </location>
    <ligand>
        <name>GTP</name>
        <dbReference type="ChEBI" id="CHEBI:37565"/>
    </ligand>
</feature>
<feature type="binding site" evidence="1">
    <location>
        <begin position="145"/>
        <end position="148"/>
    </location>
    <ligand>
        <name>GTP</name>
        <dbReference type="ChEBI" id="CHEBI:37565"/>
    </ligand>
</feature>
<gene>
    <name evidence="1" type="primary">lepA</name>
    <name type="ordered locus">Arth_2240</name>
</gene>
<sequence length="617" mass="68230">MSPMARTAPVPAATDPAIIRNFCIIAHIDHGKSTLADRMLQYTGVVQSRDMKAQYLDRMDIERERGITIKSQAVRMPWEVDGTSYALNMIDTPGHVDFTYEVSRSLAACEGAVLLVDAAQGIEAQTLANLYLAMENNLTIIPVLNKIDLPAAQPEKYAEELANLIGGDPDEVLRVSGKTGMGVEVLLDKIVRDLPAPVGDPDAPARAMIFDSVYDTYRGVVTYVRVVDGMLHPRERIQMMSTRATHELLEIGVSSPEPTPSKGLGVGEVGYLITGVKDVRLSKVGDTVTNLAKPASQSLPGYADAKPMVFSGLYPLDGTDYPVLRDALEKLMLNDAALVYQPETSAALGFGFRVGFLGLLHLEITRERLEREYKLDLISTAPNVEYEVTLEDKRVVHVTNPSEYPTGKIAEVREPMVSATILAPNEFVGAIMELCQSRRGVMGGMDYLSEDRVEIRYRLPLAEIVFDFFDILKSKTRGYGSLDWKADGDQVADLVKVDIMLQGEQVDAFSAITHRDKAYAYGVMMTGKLRELIPRQQFEVPIQAAIGSRIIARESIRAIRKDVLAKCYGGDITRKRKLLEKQKEGKKRMKMVGRVEVPQEAFIAALTTDESKDKAKK</sequence>
<accession>A0JX50</accession>